<name>FRMR_ECOL6</name>
<sequence length="91" mass="10318">MPSTPEEKKKVLTRVRRIRGQIDALERSLEGDAECRAILQQIAAVRGAANGLMAEVLESHIRETFDRNDCYSREVSQSVDDTIELVRAYLK</sequence>
<feature type="chain" id="PRO_0000168592" description="Transcriptional repressor FrmR">
    <location>
        <begin position="1"/>
        <end position="91"/>
    </location>
</feature>
<feature type="site" description="Important for response to formaldehyde" evidence="1">
    <location>
        <position position="2"/>
    </location>
</feature>
<feature type="site" description="Important for response to formaldehyde" evidence="1">
    <location>
        <position position="35"/>
    </location>
</feature>
<reference key="1">
    <citation type="journal article" date="2002" name="Proc. Natl. Acad. Sci. U.S.A.">
        <title>Extensive mosaic structure revealed by the complete genome sequence of uropathogenic Escherichia coli.</title>
        <authorList>
            <person name="Welch R.A."/>
            <person name="Burland V."/>
            <person name="Plunkett G. III"/>
            <person name="Redford P."/>
            <person name="Roesch P."/>
            <person name="Rasko D."/>
            <person name="Buckles E.L."/>
            <person name="Liou S.-R."/>
            <person name="Boutin A."/>
            <person name="Hackett J."/>
            <person name="Stroud D."/>
            <person name="Mayhew G.F."/>
            <person name="Rose D.J."/>
            <person name="Zhou S."/>
            <person name="Schwartz D.C."/>
            <person name="Perna N.T."/>
            <person name="Mobley H.L.T."/>
            <person name="Donnenberg M.S."/>
            <person name="Blattner F.R."/>
        </authorList>
    </citation>
    <scope>NUCLEOTIDE SEQUENCE [LARGE SCALE GENOMIC DNA]</scope>
    <source>
        <strain>CFT073 / ATCC 700928 / UPEC</strain>
    </source>
</reference>
<gene>
    <name evidence="1" type="primary">frmR</name>
    <name type="ordered locus">c0466</name>
</gene>
<proteinExistence type="inferred from homology"/>
<protein>
    <recommendedName>
        <fullName evidence="1">Transcriptional repressor FrmR</fullName>
    </recommendedName>
</protein>
<evidence type="ECO:0000250" key="1">
    <source>
        <dbReference type="UniProtKB" id="P0AAP3"/>
    </source>
</evidence>
<evidence type="ECO:0000305" key="2"/>
<comment type="function">
    <text evidence="1">Formaldehyde sensor. In the absence of formaldehyde, mediates repression of the frmRAB operon. Acts by binding directly to the frmRAB promoter region. In the presence of formaldehyde, it dissociates from the frmRAB promoter region and allows expression of the formaldehyde detoxification system encoded by frmA and frmB.</text>
</comment>
<comment type="subunit">
    <text evidence="1">Homotetramer.</text>
</comment>
<comment type="subcellular location">
    <subcellularLocation>
        <location evidence="1">Cytoplasm</location>
    </subcellularLocation>
</comment>
<comment type="similarity">
    <text evidence="2">Belongs to the FrmR/RcnR family.</text>
</comment>
<comment type="sequence caution" evidence="2">
    <conflict type="erroneous initiation">
        <sequence resource="EMBL-CDS" id="AAN78944"/>
    </conflict>
    <text>Extended N-terminus.</text>
</comment>
<organism>
    <name type="scientific">Escherichia coli O6:H1 (strain CFT073 / ATCC 700928 / UPEC)</name>
    <dbReference type="NCBI Taxonomy" id="199310"/>
    <lineage>
        <taxon>Bacteria</taxon>
        <taxon>Pseudomonadati</taxon>
        <taxon>Pseudomonadota</taxon>
        <taxon>Gammaproteobacteria</taxon>
        <taxon>Enterobacterales</taxon>
        <taxon>Enterobacteriaceae</taxon>
        <taxon>Escherichia</taxon>
    </lineage>
</organism>
<keyword id="KW-0963">Cytoplasm</keyword>
<keyword id="KW-0238">DNA-binding</keyword>
<keyword id="KW-1185">Reference proteome</keyword>
<keyword id="KW-0678">Repressor</keyword>
<keyword id="KW-0804">Transcription</keyword>
<keyword id="KW-0805">Transcription regulation</keyword>
<accession>P0AAP4</accession>
<accession>P55756</accession>
<accession>P77584</accession>
<dbReference type="EMBL" id="AE014075">
    <property type="protein sequence ID" value="AAN78944.1"/>
    <property type="status" value="ALT_INIT"/>
    <property type="molecule type" value="Genomic_DNA"/>
</dbReference>
<dbReference type="RefSeq" id="WP_001141271.1">
    <property type="nucleotide sequence ID" value="NZ_CP051263.1"/>
</dbReference>
<dbReference type="SMR" id="P0AAP4"/>
<dbReference type="STRING" id="199310.c0466"/>
<dbReference type="GeneID" id="93777098"/>
<dbReference type="KEGG" id="ecc:c0466"/>
<dbReference type="eggNOG" id="COG1937">
    <property type="taxonomic scope" value="Bacteria"/>
</dbReference>
<dbReference type="HOGENOM" id="CLU_130332_3_0_6"/>
<dbReference type="Proteomes" id="UP000001410">
    <property type="component" value="Chromosome"/>
</dbReference>
<dbReference type="GO" id="GO:0005737">
    <property type="term" value="C:cytoplasm"/>
    <property type="evidence" value="ECO:0007669"/>
    <property type="project" value="UniProtKB-SubCell"/>
</dbReference>
<dbReference type="GO" id="GO:0003677">
    <property type="term" value="F:DNA binding"/>
    <property type="evidence" value="ECO:0007669"/>
    <property type="project" value="UniProtKB-KW"/>
</dbReference>
<dbReference type="GO" id="GO:0046872">
    <property type="term" value="F:metal ion binding"/>
    <property type="evidence" value="ECO:0007669"/>
    <property type="project" value="InterPro"/>
</dbReference>
<dbReference type="GO" id="GO:0045892">
    <property type="term" value="P:negative regulation of DNA-templated transcription"/>
    <property type="evidence" value="ECO:0007669"/>
    <property type="project" value="UniProtKB-ARBA"/>
</dbReference>
<dbReference type="CDD" id="cd10153">
    <property type="entry name" value="RcnR-FrmR-like_DUF156"/>
    <property type="match status" value="1"/>
</dbReference>
<dbReference type="FunFam" id="1.20.58.1000:FF:000002">
    <property type="entry name" value="Transcriptional repressor FrmR"/>
    <property type="match status" value="1"/>
</dbReference>
<dbReference type="Gene3D" id="1.20.58.1000">
    <property type="entry name" value="Metal-sensitive repressor, helix protomer"/>
    <property type="match status" value="1"/>
</dbReference>
<dbReference type="InterPro" id="IPR003735">
    <property type="entry name" value="Metal_Tscrpt_repr"/>
</dbReference>
<dbReference type="InterPro" id="IPR038390">
    <property type="entry name" value="Metal_Tscrpt_repr_sf"/>
</dbReference>
<dbReference type="NCBIfam" id="NF008464">
    <property type="entry name" value="PRK11352.1"/>
    <property type="match status" value="1"/>
</dbReference>
<dbReference type="PANTHER" id="PTHR33677:SF5">
    <property type="entry name" value="TRANSCRIPTIONAL REPRESSOR FRMR"/>
    <property type="match status" value="1"/>
</dbReference>
<dbReference type="PANTHER" id="PTHR33677">
    <property type="entry name" value="TRANSCRIPTIONAL REPRESSOR FRMR-RELATED"/>
    <property type="match status" value="1"/>
</dbReference>
<dbReference type="Pfam" id="PF02583">
    <property type="entry name" value="Trns_repr_metal"/>
    <property type="match status" value="1"/>
</dbReference>